<organism>
    <name type="scientific">Vibrio cholerae</name>
    <dbReference type="NCBI Taxonomy" id="666"/>
    <lineage>
        <taxon>Bacteria</taxon>
        <taxon>Pseudomonadati</taxon>
        <taxon>Pseudomonadota</taxon>
        <taxon>Gammaproteobacteria</taxon>
        <taxon>Vibrionales</taxon>
        <taxon>Vibrionaceae</taxon>
        <taxon>Vibrio</taxon>
    </lineage>
</organism>
<gene>
    <name type="primary">tcpA</name>
</gene>
<name>TCPA_VIBCL</name>
<sequence>MQLLKQLFKKKFVKEEHDKKTGQEGMTLLEVIIVLGIMGVVSAGVVTLAQRAIDSQIMTKAAQSLNSIQVALTQTYRGLGNYPATADATAASKLTSGLVSLGKISSDEAKNPFNGTNMNIFSFPRNAAANKAFAISVDGLTQAQCKTLITSVGDMFPYIAIKAGGAVALADLGDFENSAAAAETGVGVIKSIAPASKNLDLTNITHVEKLCKGTAPFGVAFGNS</sequence>
<accession>P23024</accession>
<dbReference type="EMBL" id="M33514">
    <property type="protein sequence ID" value="AAA88688.1"/>
    <property type="molecule type" value="Genomic_DNA"/>
</dbReference>
<dbReference type="EMBL" id="X64098">
    <property type="protein sequence ID" value="CAA45455.1"/>
    <property type="molecule type" value="Genomic_DNA"/>
</dbReference>
<dbReference type="RefSeq" id="WP_001176378.1">
    <property type="nucleotide sequence ID" value="NZ_QJUC01000020.1"/>
</dbReference>
<dbReference type="PDB" id="1OQV">
    <property type="method" value="X-ray"/>
    <property type="resolution" value="1.30 A"/>
    <property type="chains" value="A/B/C=54-224"/>
</dbReference>
<dbReference type="PDB" id="8UHF">
    <property type="method" value="EM"/>
    <property type="resolution" value="3.80 A"/>
    <property type="chains" value="A/B/C/D/E/F/G/H/I=26-224"/>
</dbReference>
<dbReference type="PDBsum" id="1OQV"/>
<dbReference type="PDBsum" id="8UHF"/>
<dbReference type="EMDB" id="EMD-1955"/>
<dbReference type="EMDB" id="EMD-41968"/>
<dbReference type="SMR" id="P23024"/>
<dbReference type="EvolutionaryTrace" id="P23024"/>
<dbReference type="GO" id="GO:0043230">
    <property type="term" value="C:extracellular organelle"/>
    <property type="evidence" value="ECO:0007669"/>
    <property type="project" value="InterPro"/>
</dbReference>
<dbReference type="GO" id="GO:0016020">
    <property type="term" value="C:membrane"/>
    <property type="evidence" value="ECO:0007669"/>
    <property type="project" value="UniProtKB-SubCell"/>
</dbReference>
<dbReference type="GO" id="GO:0009289">
    <property type="term" value="C:pilus"/>
    <property type="evidence" value="ECO:0007669"/>
    <property type="project" value="UniProtKB-SubCell"/>
</dbReference>
<dbReference type="Gene3D" id="3.30.1690.10">
    <property type="entry name" value="TcpA-like pilin"/>
    <property type="match status" value="1"/>
</dbReference>
<dbReference type="InterPro" id="IPR012902">
    <property type="entry name" value="N_methyl_site"/>
</dbReference>
<dbReference type="InterPro" id="IPR045584">
    <property type="entry name" value="Pilin-like"/>
</dbReference>
<dbReference type="InterPro" id="IPR010271">
    <property type="entry name" value="TcpA"/>
</dbReference>
<dbReference type="NCBIfam" id="TIGR02532">
    <property type="entry name" value="IV_pilin_GFxxxE"/>
    <property type="match status" value="1"/>
</dbReference>
<dbReference type="Pfam" id="PF07963">
    <property type="entry name" value="N_methyl"/>
    <property type="match status" value="1"/>
</dbReference>
<dbReference type="Pfam" id="PF05946">
    <property type="entry name" value="TcpA"/>
    <property type="match status" value="1"/>
</dbReference>
<dbReference type="SUPFAM" id="SSF54523">
    <property type="entry name" value="Pili subunits"/>
    <property type="match status" value="1"/>
</dbReference>
<dbReference type="PROSITE" id="PS00409">
    <property type="entry name" value="PROKAR_NTER_METHYL"/>
    <property type="match status" value="1"/>
</dbReference>
<keyword id="KW-0002">3D-structure</keyword>
<keyword id="KW-0903">Direct protein sequencing</keyword>
<keyword id="KW-1015">Disulfide bond</keyword>
<keyword id="KW-0281">Fimbrium</keyword>
<keyword id="KW-0472">Membrane</keyword>
<keyword id="KW-0488">Methylation</keyword>
<keyword id="KW-0812">Transmembrane</keyword>
<keyword id="KW-1133">Transmembrane helix</keyword>
<reference key="1">
    <citation type="journal article" date="1989" name="Gene">
        <title>Nucleotide sequence of the structural gene, tcpA, for a major pilin subunit of Vibrio cholerae.</title>
        <authorList>
            <person name="Faast R."/>
            <person name="Ogierman M.A."/>
            <person name="Stroeher U.H."/>
            <person name="Manning P.A."/>
        </authorList>
    </citation>
    <scope>NUCLEOTIDE SEQUENCE [GENOMIC DNA]</scope>
    <source>
        <strain>Classical Inaba Z17561 / Serotype O1</strain>
    </source>
</reference>
<reference key="2">
    <citation type="journal article" date="1996" name="Gene">
        <title>Comparison of the promoter proximal regions of the toxin-co-regulated tcp gene cluster in classical and El Tor strains of Vibrio cholerae O1.</title>
        <authorList>
            <person name="Ogierman M.A."/>
            <person name="Voss E."/>
            <person name="Meaney C."/>
            <person name="Faast R."/>
            <person name="Attridge S.R."/>
            <person name="Manning P.A."/>
        </authorList>
    </citation>
    <scope>NUCLEOTIDE SEQUENCE [GENOMIC DNA]</scope>
    <source>
        <strain>Classical Inaba Z17561 / Serotype O1</strain>
    </source>
</reference>
<reference key="3">
    <citation type="journal article" date="1987" name="Proc. Natl. Acad. Sci. U.S.A.">
        <title>Use of phoA gene fusions to identify a pilus colonization factor coordinately regulated with cholera toxin.</title>
        <authorList>
            <person name="Taylor R.K."/>
            <person name="Miller V.L."/>
            <person name="Furlong D.B."/>
            <person name="Mekalanos J.J."/>
        </authorList>
    </citation>
    <scope>PROTEIN SEQUENCE OF 26-50</scope>
</reference>
<reference key="4">
    <citation type="journal article" date="2003" name="Mol. Cell">
        <title>Type IV pilin structure and assembly: X-ray and EM analyses of Vibrio cholerae toxin-coregulated pilus and Pseudomonas aeruginosa PAK pilin.</title>
        <authorList>
            <person name="Craig L."/>
            <person name="Taylor R.K."/>
            <person name="Pique M.E."/>
            <person name="Adair B.D."/>
            <person name="Arvai A.S."/>
            <person name="Singh M."/>
            <person name="Lloyd S.J."/>
            <person name="Shin D.S."/>
            <person name="Getzoff E.D."/>
            <person name="Yeager M."/>
            <person name="Forest K.T."/>
            <person name="Tainer J.A."/>
        </authorList>
    </citation>
    <scope>X-RAY CRYSTALLOGRAPHY (1.3 ANGSTROMS) OF 33-224</scope>
</reference>
<protein>
    <recommendedName>
        <fullName>Toxin coregulated pilin</fullName>
    </recommendedName>
    <alternativeName>
        <fullName>Pilus colonization factor</fullName>
    </alternativeName>
</protein>
<feature type="propeptide" id="PRO_0000024192" description="Atypical leader sequence" evidence="2 3">
    <location>
        <begin position="1"/>
        <end position="25"/>
    </location>
</feature>
<feature type="chain" id="PRO_0000024193" description="Toxin coregulated pilin">
    <location>
        <begin position="26"/>
        <end position="224"/>
    </location>
</feature>
<feature type="transmembrane region" description="Helical" evidence="4">
    <location>
        <begin position="26"/>
        <end position="46"/>
    </location>
</feature>
<feature type="modified residue" description="N-methylmethionine" evidence="2">
    <location>
        <position position="26"/>
    </location>
</feature>
<feature type="disulfide bond">
    <location>
        <begin position="145"/>
        <end position="211"/>
    </location>
</feature>
<feature type="sequence conflict" description="In Ref. 2; CAA45455." evidence="4" ref="2">
    <original>I</original>
    <variation>N</variation>
    <location>
        <position position="57"/>
    </location>
</feature>
<feature type="sequence conflict" description="In Ref. 2; CAA45455." evidence="4" ref="2">
    <original>N</original>
    <variation>I</variation>
    <location>
        <position position="114"/>
    </location>
</feature>
<feature type="helix" evidence="5">
    <location>
        <begin position="56"/>
        <end position="76"/>
    </location>
</feature>
<feature type="helix" evidence="5">
    <location>
        <begin position="77"/>
        <end position="79"/>
    </location>
</feature>
<feature type="helix" evidence="5">
    <location>
        <begin position="88"/>
        <end position="100"/>
    </location>
</feature>
<feature type="helix" evidence="5">
    <location>
        <begin position="106"/>
        <end position="109"/>
    </location>
</feature>
<feature type="turn" evidence="5">
    <location>
        <begin position="112"/>
        <end position="114"/>
    </location>
</feature>
<feature type="strand" evidence="5">
    <location>
        <begin position="115"/>
        <end position="117"/>
    </location>
</feature>
<feature type="strand" evidence="5">
    <location>
        <begin position="119"/>
        <end position="125"/>
    </location>
</feature>
<feature type="strand" evidence="5">
    <location>
        <begin position="128"/>
        <end position="140"/>
    </location>
</feature>
<feature type="helix" evidence="5">
    <location>
        <begin position="142"/>
        <end position="152"/>
    </location>
</feature>
<feature type="helix" evidence="5">
    <location>
        <begin position="153"/>
        <end position="155"/>
    </location>
</feature>
<feature type="strand" evidence="5">
    <location>
        <begin position="157"/>
        <end position="165"/>
    </location>
</feature>
<feature type="helix" evidence="5">
    <location>
        <begin position="169"/>
        <end position="172"/>
    </location>
</feature>
<feature type="turn" evidence="5">
    <location>
        <begin position="175"/>
        <end position="177"/>
    </location>
</feature>
<feature type="helix" evidence="5">
    <location>
        <begin position="182"/>
        <end position="184"/>
    </location>
</feature>
<feature type="strand" evidence="5">
    <location>
        <begin position="185"/>
        <end position="190"/>
    </location>
</feature>
<feature type="helix" evidence="5">
    <location>
        <begin position="204"/>
        <end position="209"/>
    </location>
</feature>
<feature type="strand" evidence="5">
    <location>
        <begin position="213"/>
        <end position="215"/>
    </location>
</feature>
<feature type="strand" evidence="5">
    <location>
        <begin position="217"/>
        <end position="223"/>
    </location>
</feature>
<evidence type="ECO:0000250" key="1">
    <source>
        <dbReference type="UniProtKB" id="Q60153"/>
    </source>
</evidence>
<evidence type="ECO:0000255" key="2">
    <source>
        <dbReference type="PROSITE-ProRule" id="PRU01070"/>
    </source>
</evidence>
<evidence type="ECO:0000269" key="3">
    <source>
    </source>
</evidence>
<evidence type="ECO:0000305" key="4"/>
<evidence type="ECO:0007829" key="5">
    <source>
        <dbReference type="PDB" id="1OQV"/>
    </source>
</evidence>
<comment type="function">
    <text evidence="1">Major component of the toxin co-regulated pilus (tcp) which is a type IV pilus essential for bacterial aggregation and subsequent colonization in the host small intestine.</text>
</comment>
<comment type="subcellular location">
    <subcellularLocation>
        <location>Fimbrium</location>
    </subcellularLocation>
    <subcellularLocation>
        <location evidence="4">Membrane</location>
        <topology evidence="4">Single-pass membrane protein</topology>
    </subcellularLocation>
</comment>
<comment type="domain">
    <text>The leader sequence region and some other sequence particularities suggest that TcpA may represent a novel class of pilin, and imply the existence of a novel signal peptidase.</text>
</comment>
<proteinExistence type="evidence at protein level"/>